<comment type="function">
    <text evidence="3">Catalyzes the oxidation of the physiological electron carriers NADH and reduced ferredoxin, coupled to the production of H(2) (PubMed:19411328). Acts as a bifurcating [FeFe] hydrogenase, which uses the exergonic oxidation of reduced ferredoxin to drive the unfavorable oxidation of NADH to produce H(2) (PubMed:19411328). The gamma subunit might be the site where reduced ferredoxin is oxidized (PubMed:19411328).</text>
</comment>
<comment type="catalytic activity">
    <reaction evidence="3">
        <text>2 H2 + 2 oxidized [2Fe-2S]-[ferredoxin] + NAD(+) = 2 reduced [2Fe-2S]-[ferredoxin] + NADH + 3 H(+)</text>
        <dbReference type="Rhea" id="RHEA:30279"/>
        <dbReference type="Rhea" id="RHEA-COMP:10000"/>
        <dbReference type="Rhea" id="RHEA-COMP:10001"/>
        <dbReference type="ChEBI" id="CHEBI:15378"/>
        <dbReference type="ChEBI" id="CHEBI:18276"/>
        <dbReference type="ChEBI" id="CHEBI:33737"/>
        <dbReference type="ChEBI" id="CHEBI:33738"/>
        <dbReference type="ChEBI" id="CHEBI:57540"/>
        <dbReference type="ChEBI" id="CHEBI:57945"/>
        <dbReference type="EC" id="1.12.1.4"/>
    </reaction>
    <physiologicalReaction direction="right-to-left" evidence="3">
        <dbReference type="Rhea" id="RHEA:30281"/>
    </physiologicalReaction>
</comment>
<comment type="cofactor">
    <cofactor evidence="4">
        <name>[2Fe-2S] cluster</name>
        <dbReference type="ChEBI" id="CHEBI:190135"/>
    </cofactor>
    <text evidence="1">Binds 1 [2Fe-2S] cluster.</text>
</comment>
<comment type="biophysicochemical properties">
    <redoxPotential>
        <text evidence="4">E(0) is -361 mV.</text>
    </redoxPotential>
</comment>
<comment type="subunit">
    <text evidence="2">Heterotrimer composed of HydA (alpha subunit), HydB (beta subunit) and HydC (gamma subunit) (PubMed:10482784). Near neutral and acidic pH conditions favor oligomerization of the heterotrimeric holoenzyme (PubMed:10482784).</text>
</comment>
<comment type="subcellular location">
    <subcellularLocation>
        <location evidence="3">Cytoplasm</location>
    </subcellularLocation>
</comment>
<comment type="similarity">
    <text evidence="7">Belongs to the complex I 24 kDa subunit family.</text>
</comment>
<comment type="sequence caution" evidence="7">
    <conflict type="erroneous initiation">
        <sequence resource="EMBL-CDS" id="AAD36494"/>
    </conflict>
    <text>Extended N-terminus.</text>
</comment>
<protein>
    <recommendedName>
        <fullName evidence="6">Bifurcating [FeFe] hydrogenase gamma subunit</fullName>
        <ecNumber evidence="3">1.12.1.4</ecNumber>
    </recommendedName>
    <alternativeName>
        <fullName evidence="7">Hydrogenase (NAD(+), ferredoxin) gamma subunit</fullName>
    </alternativeName>
    <alternativeName>
        <fullName evidence="5">Iron-hydrogenase gamma subunit</fullName>
    </alternativeName>
</protein>
<keyword id="KW-0001">2Fe-2S</keyword>
<keyword id="KW-0002">3D-structure</keyword>
<keyword id="KW-0963">Cytoplasm</keyword>
<keyword id="KW-0903">Direct protein sequencing</keyword>
<keyword id="KW-0408">Iron</keyword>
<keyword id="KW-0411">Iron-sulfur</keyword>
<keyword id="KW-0479">Metal-binding</keyword>
<keyword id="KW-0520">NAD</keyword>
<keyword id="KW-0560">Oxidoreductase</keyword>
<keyword id="KW-1185">Reference proteome</keyword>
<evidence type="ECO:0000250" key="1">
    <source>
        <dbReference type="UniProtKB" id="Q56221"/>
    </source>
</evidence>
<evidence type="ECO:0000269" key="2">
    <source>
    </source>
</evidence>
<evidence type="ECO:0000269" key="3">
    <source>
    </source>
</evidence>
<evidence type="ECO:0000269" key="4">
    <source>
    </source>
</evidence>
<evidence type="ECO:0000303" key="5">
    <source>
    </source>
</evidence>
<evidence type="ECO:0000303" key="6">
    <source>
    </source>
</evidence>
<evidence type="ECO:0000305" key="7"/>
<evidence type="ECO:0000312" key="8">
    <source>
        <dbReference type="EMBL" id="AAD36494.1"/>
    </source>
</evidence>
<evidence type="ECO:0000312" key="9">
    <source>
        <dbReference type="EMBL" id="AGL50354.1"/>
    </source>
</evidence>
<evidence type="ECO:0007829" key="10">
    <source>
        <dbReference type="PDB" id="7P5H"/>
    </source>
</evidence>
<evidence type="ECO:0007829" key="11">
    <source>
        <dbReference type="PDB" id="7P92"/>
    </source>
</evidence>
<organism>
    <name type="scientific">Thermotoga maritima (strain ATCC 43589 / DSM 3109 / JCM 10099 / NBRC 100826 / MSB8)</name>
    <dbReference type="NCBI Taxonomy" id="243274"/>
    <lineage>
        <taxon>Bacteria</taxon>
        <taxon>Thermotogati</taxon>
        <taxon>Thermotogota</taxon>
        <taxon>Thermotogae</taxon>
        <taxon>Thermotogales</taxon>
        <taxon>Thermotogaceae</taxon>
        <taxon>Thermotoga</taxon>
    </lineage>
</organism>
<gene>
    <name evidence="5" type="primary">hydC</name>
    <name evidence="8" type="ordered locus">TM_1424</name>
    <name evidence="9" type="ORF">Tmari_1430</name>
</gene>
<reference key="1">
    <citation type="journal article" date="1999" name="Biochim. Biophys. Acta">
        <title>The hyperthermophilic bacterium, Thermotoga maritima, contains an unusually complex iron-hydrogenase: amino acid sequence analyses versus biochemical characterization.</title>
        <authorList>
            <person name="Verhagen M.F."/>
            <person name="O'Rourke T."/>
            <person name="Adams M.W."/>
        </authorList>
    </citation>
    <scope>NUCLEOTIDE SEQUENCE [GENOMIC DNA]</scope>
    <scope>PROTEIN SEQUENCE OF 1-15</scope>
    <scope>SUBUNIT</scope>
    <source>
        <strain>ATCC 43589 / DSM 3109 / JCM 10099 / NBRC 100826 / MSB8</strain>
    </source>
</reference>
<reference key="2">
    <citation type="journal article" date="1999" name="Nature">
        <title>Evidence for lateral gene transfer between Archaea and Bacteria from genome sequence of Thermotoga maritima.</title>
        <authorList>
            <person name="Nelson K.E."/>
            <person name="Clayton R.A."/>
            <person name="Gill S.R."/>
            <person name="Gwinn M.L."/>
            <person name="Dodson R.J."/>
            <person name="Haft D.H."/>
            <person name="Hickey E.K."/>
            <person name="Peterson J.D."/>
            <person name="Nelson W.C."/>
            <person name="Ketchum K.A."/>
            <person name="McDonald L.A."/>
            <person name="Utterback T.R."/>
            <person name="Malek J.A."/>
            <person name="Linher K.D."/>
            <person name="Garrett M.M."/>
            <person name="Stewart A.M."/>
            <person name="Cotton M.D."/>
            <person name="Pratt M.S."/>
            <person name="Phillips C.A."/>
            <person name="Richardson D.L."/>
            <person name="Heidelberg J.F."/>
            <person name="Sutton G.G."/>
            <person name="Fleischmann R.D."/>
            <person name="Eisen J.A."/>
            <person name="White O."/>
            <person name="Salzberg S.L."/>
            <person name="Smith H.O."/>
            <person name="Venter J.C."/>
            <person name="Fraser C.M."/>
        </authorList>
    </citation>
    <scope>NUCLEOTIDE SEQUENCE [LARGE SCALE GENOMIC DNA]</scope>
    <source>
        <strain>ATCC 43589 / DSM 3109 / JCM 10099 / NBRC 100826 / MSB8</strain>
    </source>
</reference>
<reference key="3">
    <citation type="journal article" date="2013" name="PLoS Genet.">
        <title>The genome organization of Thermotoga maritima reflects its lifestyle.</title>
        <authorList>
            <person name="Latif H."/>
            <person name="Lerman J.A."/>
            <person name="Portnoy V.A."/>
            <person name="Tarasova Y."/>
            <person name="Nagarajan H."/>
            <person name="Schrimpe-Rutledge A.C."/>
            <person name="Smith R.D."/>
            <person name="Adkins J.N."/>
            <person name="Lee D.H."/>
            <person name="Qiu Y."/>
            <person name="Zengler K."/>
        </authorList>
    </citation>
    <scope>NUCLEOTIDE SEQUENCE [LARGE SCALE GENOMIC DNA]</scope>
    <source>
        <strain>ATCC 43589 / DSM 3109 / JCM 10099 / NBRC 100826 / MSB8</strain>
    </source>
</reference>
<reference key="4">
    <citation type="journal article" date="2009" name="J. Bacteriol.">
        <title>The iron-hydrogenase of Thermotoga maritima utilizes ferredoxin and NADH synergistically: a new perspective on anaerobic hydrogen production.</title>
        <authorList>
            <person name="Schut G.J."/>
            <person name="Adams M.W."/>
        </authorList>
    </citation>
    <scope>FUNCTION</scope>
    <scope>CATALYTIC ACTIVITY</scope>
    <scope>SUBCELLULAR LOCATION</scope>
    <source>
        <strain>ATCC 43589 / DSM 3109 / JCM 10099 / NBRC 100826 / MSB8</strain>
    </source>
</reference>
<reference key="5">
    <citation type="journal article" date="2016" name="Biochemistry">
        <title>Importance of hydrogen bonding in fine tuning the [2Fe-2S] cluster redox potential of HydC from Thermotoga maritima.</title>
        <authorList>
            <person name="Birrell J.A."/>
            <person name="Laurich C."/>
            <person name="Reijerse E.J."/>
            <person name="Ogata H."/>
            <person name="Lubitz W."/>
        </authorList>
    </citation>
    <scope>COFACTOR</scope>
    <scope>BIOPHYSICOCHEMICAL PROPERTIES</scope>
    <scope>MUTAGENESIS OF ASP-79; GLY-80; THR-81; ALA-82; LEU-120; GLY-121; ALA-122 AND VAL-128</scope>
    <source>
        <strain>ATCC 43589 / DSM 3109 / JCM 10099 / NBRC 100826 / MSB8</strain>
    </source>
</reference>
<name>HYDC_THEMA</name>
<dbReference type="EC" id="1.12.1.4" evidence="3"/>
<dbReference type="EMBL" id="AF044577">
    <property type="protein sequence ID" value="AAC02684.1"/>
    <property type="molecule type" value="Genomic_DNA"/>
</dbReference>
<dbReference type="EMBL" id="AE000512">
    <property type="protein sequence ID" value="AAD36494.1"/>
    <property type="status" value="ALT_INIT"/>
    <property type="molecule type" value="Genomic_DNA"/>
</dbReference>
<dbReference type="EMBL" id="CP004077">
    <property type="protein sequence ID" value="AGL50354.1"/>
    <property type="molecule type" value="Genomic_DNA"/>
</dbReference>
<dbReference type="PIR" id="E72256">
    <property type="entry name" value="E72256"/>
</dbReference>
<dbReference type="RefSeq" id="NP_229224.1">
    <property type="nucleotide sequence ID" value="NC_000853.1"/>
</dbReference>
<dbReference type="PDB" id="7P5H">
    <property type="method" value="EM"/>
    <property type="resolution" value="2.30 A"/>
    <property type="chains" value="C/F/c/f=1-161"/>
</dbReference>
<dbReference type="PDB" id="7P8N">
    <property type="method" value="EM"/>
    <property type="resolution" value="2.80 A"/>
    <property type="chains" value="C/c=1-161"/>
</dbReference>
<dbReference type="PDB" id="7P91">
    <property type="method" value="EM"/>
    <property type="resolution" value="2.80 A"/>
    <property type="chains" value="C/c=1-161"/>
</dbReference>
<dbReference type="PDB" id="7P92">
    <property type="method" value="EM"/>
    <property type="resolution" value="2.70 A"/>
    <property type="chains" value="C=1-161"/>
</dbReference>
<dbReference type="PDBsum" id="7P5H"/>
<dbReference type="PDBsum" id="7P8N"/>
<dbReference type="PDBsum" id="7P91"/>
<dbReference type="PDBsum" id="7P92"/>
<dbReference type="EMDB" id="EMD-13199"/>
<dbReference type="EMDB" id="EMD-13254"/>
<dbReference type="EMDB" id="EMD-13257"/>
<dbReference type="EMDB" id="EMD-13258"/>
<dbReference type="SMR" id="O52681"/>
<dbReference type="STRING" id="243274.TM_1424"/>
<dbReference type="PaxDb" id="243274-THEMA_07195"/>
<dbReference type="EnsemblBacteria" id="AAD36494">
    <property type="protein sequence ID" value="AAD36494"/>
    <property type="gene ID" value="TM_1424"/>
</dbReference>
<dbReference type="KEGG" id="tma:TM1424"/>
<dbReference type="KEGG" id="tmi:THEMA_07195"/>
<dbReference type="KEGG" id="tmm:Tmari_1430"/>
<dbReference type="KEGG" id="tmw:THMA_1454"/>
<dbReference type="PATRIC" id="fig|2336.4.peg.1416"/>
<dbReference type="eggNOG" id="COG1905">
    <property type="taxonomic scope" value="Bacteria"/>
</dbReference>
<dbReference type="OrthoDB" id="9807941at2"/>
<dbReference type="BioCyc" id="MetaCyc:MONOMER-263"/>
<dbReference type="Proteomes" id="UP000008183">
    <property type="component" value="Chromosome"/>
</dbReference>
<dbReference type="GO" id="GO:0005737">
    <property type="term" value="C:cytoplasm"/>
    <property type="evidence" value="ECO:0007669"/>
    <property type="project" value="UniProtKB-SubCell"/>
</dbReference>
<dbReference type="GO" id="GO:0051537">
    <property type="term" value="F:2 iron, 2 sulfur cluster binding"/>
    <property type="evidence" value="ECO:0007669"/>
    <property type="project" value="UniProtKB-KW"/>
</dbReference>
<dbReference type="GO" id="GO:0046872">
    <property type="term" value="F:metal ion binding"/>
    <property type="evidence" value="ECO:0007669"/>
    <property type="project" value="UniProtKB-KW"/>
</dbReference>
<dbReference type="GO" id="GO:0016491">
    <property type="term" value="F:oxidoreductase activity"/>
    <property type="evidence" value="ECO:0007669"/>
    <property type="project" value="UniProtKB-KW"/>
</dbReference>
<dbReference type="CDD" id="cd03064">
    <property type="entry name" value="TRX_Fd_NuoE"/>
    <property type="match status" value="1"/>
</dbReference>
<dbReference type="FunFam" id="1.10.10.1590:FF:000001">
    <property type="entry name" value="NADH-quinone oxidoreductase subunit E"/>
    <property type="match status" value="1"/>
</dbReference>
<dbReference type="Gene3D" id="3.40.30.10">
    <property type="entry name" value="Glutaredoxin"/>
    <property type="match status" value="1"/>
</dbReference>
<dbReference type="Gene3D" id="1.10.10.1590">
    <property type="entry name" value="NADH-quinone oxidoreductase subunit E"/>
    <property type="match status" value="1"/>
</dbReference>
<dbReference type="InterPro" id="IPR028431">
    <property type="entry name" value="NADP_DH_HndA-like"/>
</dbReference>
<dbReference type="InterPro" id="IPR002023">
    <property type="entry name" value="NuoE-like"/>
</dbReference>
<dbReference type="InterPro" id="IPR042128">
    <property type="entry name" value="NuoE_dom"/>
</dbReference>
<dbReference type="InterPro" id="IPR041921">
    <property type="entry name" value="NuoE_N"/>
</dbReference>
<dbReference type="InterPro" id="IPR036249">
    <property type="entry name" value="Thioredoxin-like_sf"/>
</dbReference>
<dbReference type="NCBIfam" id="NF005722">
    <property type="entry name" value="PRK07539.1-2"/>
    <property type="match status" value="1"/>
</dbReference>
<dbReference type="PANTHER" id="PTHR43342:SF1">
    <property type="entry name" value="BIFURCATING [FEFE] HYDROGENASE GAMMA SUBUNIT"/>
    <property type="match status" value="1"/>
</dbReference>
<dbReference type="PANTHER" id="PTHR43342">
    <property type="entry name" value="NADH-QUINONE OXIDOREDUCTASE, E SUBUNIT"/>
    <property type="match status" value="1"/>
</dbReference>
<dbReference type="Pfam" id="PF01257">
    <property type="entry name" value="2Fe-2S_thioredx"/>
    <property type="match status" value="1"/>
</dbReference>
<dbReference type="PIRSF" id="PIRSF000216">
    <property type="entry name" value="NADH_DH_24kDa"/>
    <property type="match status" value="1"/>
</dbReference>
<dbReference type="SUPFAM" id="SSF52833">
    <property type="entry name" value="Thioredoxin-like"/>
    <property type="match status" value="1"/>
</dbReference>
<dbReference type="PROSITE" id="PS01099">
    <property type="entry name" value="COMPLEX1_24K"/>
    <property type="match status" value="1"/>
</dbReference>
<sequence>MERHFEKVEEILKKYGYKRENLIKILLEIQEIYRYLPEDVINYVSTAMGIPPAKIYGVATFYAQFSLKPKGKYTIMVCDGTACHMAGSPEVLKAIEEETGLTPGNVTEDLMFSLDQVGCLGACALAPVMVINGEVYGNLTADKVKEILRKIKEKERESANV</sequence>
<feature type="chain" id="PRO_0000457858" description="Bifurcating [FeFe] hydrogenase gamma subunit">
    <location>
        <begin position="1"/>
        <end position="161"/>
    </location>
</feature>
<feature type="binding site" evidence="1">
    <location>
        <position position="78"/>
    </location>
    <ligand>
        <name>[2Fe-2S] cluster</name>
        <dbReference type="ChEBI" id="CHEBI:190135"/>
    </ligand>
</feature>
<feature type="binding site" evidence="1">
    <location>
        <position position="83"/>
    </location>
    <ligand>
        <name>[2Fe-2S] cluster</name>
        <dbReference type="ChEBI" id="CHEBI:190135"/>
    </ligand>
</feature>
<feature type="binding site" evidence="1">
    <location>
        <position position="119"/>
    </location>
    <ligand>
        <name>[2Fe-2S] cluster</name>
        <dbReference type="ChEBI" id="CHEBI:190135"/>
    </ligand>
</feature>
<feature type="binding site" evidence="1">
    <location>
        <position position="123"/>
    </location>
    <ligand>
        <name>[2Fe-2S] cluster</name>
        <dbReference type="ChEBI" id="CHEBI:190135"/>
    </ligand>
</feature>
<feature type="mutagenesis site" description="Increase (30 mV) in the redox potential." evidence="4">
    <original>D</original>
    <variation>P</variation>
    <location>
        <position position="79"/>
    </location>
</feature>
<feature type="mutagenesis site" description="Large decrease (149 mV) in the redox potential. Causes a change to a [4Fe-4S] cluster protein." evidence="4">
    <original>G</original>
    <variation>P</variation>
    <location>
        <position position="80"/>
    </location>
</feature>
<feature type="mutagenesis site" description="Small increase (11 mV) in the redox potential." evidence="4">
    <original>T</original>
    <variation>P</variation>
    <location>
        <position position="81"/>
    </location>
</feature>
<feature type="mutagenesis site" description="Decrease (46 mV) in the redox potential." evidence="4">
    <original>A</original>
    <variation>P</variation>
    <location>
        <position position="82"/>
    </location>
</feature>
<feature type="mutagenesis site" description="Large decrease (65 mV) in the redox potential." evidence="4">
    <original>L</original>
    <variation>P</variation>
    <location>
        <position position="120"/>
    </location>
</feature>
<feature type="mutagenesis site" description="Decrease (22 mV) in the redox potential." evidence="4">
    <original>G</original>
    <variation>P</variation>
    <location>
        <position position="121"/>
    </location>
</feature>
<feature type="mutagenesis site" description="Large decrease (132 mV) in the redox potential." evidence="4">
    <original>A</original>
    <variation>P</variation>
    <location>
        <position position="122"/>
    </location>
</feature>
<feature type="mutagenesis site" description="Small increase (about 2-14 mV) in the redox potential." evidence="4">
    <original>V</original>
    <variation>A</variation>
    <variation>C</variation>
    <variation>H</variation>
    <variation>Y</variation>
    <location>
        <position position="128"/>
    </location>
</feature>
<feature type="mutagenesis site" description="Increase (about 23-33 mV) in the redox potential." evidence="4">
    <original>V</original>
    <variation>D</variation>
    <variation>G</variation>
    <variation>R</variation>
    <variation>S</variation>
    <variation>T</variation>
    <variation>W</variation>
    <location>
        <position position="128"/>
    </location>
</feature>
<feature type="mutagenesis site" description="Decrease (about 37-50 mV) in the redox potential." evidence="4">
    <original>V</original>
    <variation>E</variation>
    <variation>K</variation>
    <variation>L</variation>
    <variation>M</variation>
    <location>
        <position position="128"/>
    </location>
</feature>
<feature type="mutagenesis site" description="Small decrease (about 4-20 mV) in the redox potential." evidence="4">
    <original>V</original>
    <variation>F</variation>
    <variation>I</variation>
    <variation>P</variation>
    <variation>Q</variation>
    <location>
        <position position="128"/>
    </location>
</feature>
<feature type="mutagenesis site" description="Large increase (85 mV) in the redox potential." evidence="4">
    <original>V</original>
    <variation>N</variation>
    <location>
        <position position="128"/>
    </location>
</feature>
<feature type="helix" evidence="10">
    <location>
        <begin position="6"/>
        <end position="15"/>
    </location>
</feature>
<feature type="helix" evidence="10">
    <location>
        <begin position="19"/>
        <end position="21"/>
    </location>
</feature>
<feature type="helix" evidence="10">
    <location>
        <begin position="22"/>
        <end position="33"/>
    </location>
</feature>
<feature type="helix" evidence="10">
    <location>
        <begin position="38"/>
        <end position="48"/>
    </location>
</feature>
<feature type="helix" evidence="10">
    <location>
        <begin position="52"/>
        <end position="59"/>
    </location>
</feature>
<feature type="strand" evidence="10">
    <location>
        <begin position="62"/>
        <end position="64"/>
    </location>
</feature>
<feature type="strand" evidence="10">
    <location>
        <begin position="72"/>
        <end position="78"/>
    </location>
</feature>
<feature type="helix" evidence="10">
    <location>
        <begin position="81"/>
        <end position="85"/>
    </location>
</feature>
<feature type="helix" evidence="10">
    <location>
        <begin position="88"/>
        <end position="99"/>
    </location>
</feature>
<feature type="strand" evidence="10">
    <location>
        <begin position="110"/>
        <end position="118"/>
    </location>
</feature>
<feature type="helix" evidence="10">
    <location>
        <begin position="123"/>
        <end position="125"/>
    </location>
</feature>
<feature type="strand" evidence="10">
    <location>
        <begin position="129"/>
        <end position="131"/>
    </location>
</feature>
<feature type="strand" evidence="11">
    <location>
        <begin position="134"/>
        <end position="136"/>
    </location>
</feature>
<feature type="helix" evidence="10">
    <location>
        <begin position="141"/>
        <end position="155"/>
    </location>
</feature>
<proteinExistence type="evidence at protein level"/>
<accession>O52681</accession>
<accession>G4FFF9</accession>
<accession>Q9S5X7</accession>